<comment type="function">
    <text>Has bacteriostatic activity against Gram-positive bacteria S.aureus and L.monocytogenes and Gram-negative bacterium E.coli and antifungal activity against C.neoformans.</text>
</comment>
<comment type="subcellular location">
    <subcellularLocation>
        <location>Secreted</location>
    </subcellularLocation>
</comment>
<comment type="mass spectrometry" mass="3590.1" method="MALDI" evidence="3"/>
<comment type="similarity">
    <text evidence="4">Belongs to the alpha-defensin family.</text>
</comment>
<organism>
    <name type="scientific">Macaca mulatta</name>
    <name type="common">Rhesus macaque</name>
    <dbReference type="NCBI Taxonomy" id="9544"/>
    <lineage>
        <taxon>Eukaryota</taxon>
        <taxon>Metazoa</taxon>
        <taxon>Chordata</taxon>
        <taxon>Craniata</taxon>
        <taxon>Vertebrata</taxon>
        <taxon>Euteleostomi</taxon>
        <taxon>Mammalia</taxon>
        <taxon>Eutheria</taxon>
        <taxon>Euarchontoglires</taxon>
        <taxon>Primates</taxon>
        <taxon>Haplorrhini</taxon>
        <taxon>Catarrhini</taxon>
        <taxon>Cercopithecidae</taxon>
        <taxon>Cercopithecinae</taxon>
        <taxon>Macaca</taxon>
    </lineage>
</organism>
<protein>
    <recommendedName>
        <fullName>Neutrophil defensin 3</fullName>
    </recommendedName>
    <alternativeName>
        <fullName>RMAD-3</fullName>
    </alternativeName>
</protein>
<reference key="1">
    <citation type="journal article" date="1999" name="Infect. Immun.">
        <title>Isolation, characterization, cDNA cloning, and antimicrobial properties of two distinct subfamilies of alpha-defensins from rhesus macaque leukocytes.</title>
        <authorList>
            <person name="Tang Y.Q."/>
            <person name="Yuan J."/>
            <person name="Miller C.J."/>
            <person name="Selsted M.E."/>
        </authorList>
    </citation>
    <scope>NUCLEOTIDE SEQUENCE [MRNA]</scope>
    <scope>PROTEIN SEQUENCE OF 67-96</scope>
    <scope>MASS SPECTROMETRY</scope>
    <source>
        <tissue>Bone marrow</tissue>
        <tissue>Leukocyte</tissue>
    </source>
</reference>
<keyword id="KW-0044">Antibiotic</keyword>
<keyword id="KW-0929">Antimicrobial</keyword>
<keyword id="KW-0211">Defensin</keyword>
<keyword id="KW-0903">Direct protein sequencing</keyword>
<keyword id="KW-1015">Disulfide bond</keyword>
<keyword id="KW-0295">Fungicide</keyword>
<keyword id="KW-1185">Reference proteome</keyword>
<keyword id="KW-0964">Secreted</keyword>
<keyword id="KW-0732">Signal</keyword>
<accession>P60031</accession>
<accession>P82318</accession>
<sequence length="96" mass="10686">MRTLVILAAILLVALQAQAEPLQARTDEATAAQEQIPTDNPEVVVSLAWDESLAPKDSVPGLRKNMACYCRIPACLAGERRYGTCFYRRRVWAFCC</sequence>
<feature type="signal peptide" evidence="2">
    <location>
        <begin position="1"/>
        <end position="19"/>
    </location>
</feature>
<feature type="propeptide" id="PRO_0000006797" evidence="3">
    <location>
        <begin position="20"/>
        <end position="66"/>
    </location>
</feature>
<feature type="peptide" id="PRO_0000006798" description="Neutrophil defensin 3">
    <location>
        <begin position="67"/>
        <end position="96"/>
    </location>
</feature>
<feature type="disulfide bond" evidence="1">
    <location>
        <begin position="68"/>
        <end position="96"/>
    </location>
</feature>
<feature type="disulfide bond" evidence="1">
    <location>
        <begin position="70"/>
        <end position="85"/>
    </location>
</feature>
<feature type="disulfide bond" evidence="1">
    <location>
        <begin position="75"/>
        <end position="95"/>
    </location>
</feature>
<proteinExistence type="evidence at protein level"/>
<evidence type="ECO:0000250" key="1"/>
<evidence type="ECO:0000255" key="2"/>
<evidence type="ECO:0000269" key="3">
    <source>
    </source>
</evidence>
<evidence type="ECO:0000305" key="4"/>
<name>DEF3_MACMU</name>
<dbReference type="EMBL" id="AF188269">
    <property type="protein sequence ID" value="AAF06313.1"/>
    <property type="molecule type" value="mRNA"/>
</dbReference>
<dbReference type="SMR" id="P60031"/>
<dbReference type="FunCoup" id="P60031">
    <property type="interactions" value="414"/>
</dbReference>
<dbReference type="InParanoid" id="P60031"/>
<dbReference type="Proteomes" id="UP000006718">
    <property type="component" value="Unassembled WGS sequence"/>
</dbReference>
<dbReference type="GO" id="GO:0005615">
    <property type="term" value="C:extracellular space"/>
    <property type="evidence" value="ECO:0000318"/>
    <property type="project" value="GO_Central"/>
</dbReference>
<dbReference type="GO" id="GO:0019731">
    <property type="term" value="P:antibacterial humoral response"/>
    <property type="evidence" value="ECO:0000318"/>
    <property type="project" value="GO_Central"/>
</dbReference>
<dbReference type="GO" id="GO:0061844">
    <property type="term" value="P:antimicrobial humoral immune response mediated by antimicrobial peptide"/>
    <property type="evidence" value="ECO:0000318"/>
    <property type="project" value="GO_Central"/>
</dbReference>
<dbReference type="GO" id="GO:0071222">
    <property type="term" value="P:cellular response to lipopolysaccharide"/>
    <property type="evidence" value="ECO:0000318"/>
    <property type="project" value="GO_Central"/>
</dbReference>
<dbReference type="GO" id="GO:0050832">
    <property type="term" value="P:defense response to fungus"/>
    <property type="evidence" value="ECO:0007669"/>
    <property type="project" value="UniProtKB-KW"/>
</dbReference>
<dbReference type="GO" id="GO:0050829">
    <property type="term" value="P:defense response to Gram-negative bacterium"/>
    <property type="evidence" value="ECO:0000318"/>
    <property type="project" value="GO_Central"/>
</dbReference>
<dbReference type="GO" id="GO:0050830">
    <property type="term" value="P:defense response to Gram-positive bacterium"/>
    <property type="evidence" value="ECO:0000318"/>
    <property type="project" value="GO_Central"/>
</dbReference>
<dbReference type="GO" id="GO:0051673">
    <property type="term" value="P:disruption of plasma membrane integrity in another organism"/>
    <property type="evidence" value="ECO:0000318"/>
    <property type="project" value="GO_Central"/>
</dbReference>
<dbReference type="GO" id="GO:0002227">
    <property type="term" value="P:innate immune response in mucosa"/>
    <property type="evidence" value="ECO:0000318"/>
    <property type="project" value="GO_Central"/>
</dbReference>
<dbReference type="GO" id="GO:0031640">
    <property type="term" value="P:killing of cells of another organism"/>
    <property type="evidence" value="ECO:0007669"/>
    <property type="project" value="UniProtKB-KW"/>
</dbReference>
<dbReference type="InterPro" id="IPR016327">
    <property type="entry name" value="Alpha-defensin"/>
</dbReference>
<dbReference type="InterPro" id="IPR006081">
    <property type="entry name" value="Alpha-defensin_C"/>
</dbReference>
<dbReference type="InterPro" id="IPR002366">
    <property type="entry name" value="Alpha-defensin_N"/>
</dbReference>
<dbReference type="InterPro" id="IPR006080">
    <property type="entry name" value="Beta/alpha-defensin_C"/>
</dbReference>
<dbReference type="PANTHER" id="PTHR11876">
    <property type="entry name" value="ALPHA-DEFENSIN 1"/>
    <property type="match status" value="1"/>
</dbReference>
<dbReference type="PANTHER" id="PTHR11876:SF19">
    <property type="entry name" value="NEUTROPHIL DEFENSIN 1-RELATED"/>
    <property type="match status" value="1"/>
</dbReference>
<dbReference type="Pfam" id="PF00323">
    <property type="entry name" value="Defensin_1"/>
    <property type="match status" value="1"/>
</dbReference>
<dbReference type="Pfam" id="PF00879">
    <property type="entry name" value="Defensin_propep"/>
    <property type="match status" value="1"/>
</dbReference>
<dbReference type="PIRSF" id="PIRSF001875">
    <property type="entry name" value="Alpha-defensin"/>
    <property type="match status" value="1"/>
</dbReference>
<dbReference type="SMART" id="SM01418">
    <property type="entry name" value="Defensin_propep"/>
    <property type="match status" value="1"/>
</dbReference>
<dbReference type="SMART" id="SM00048">
    <property type="entry name" value="DEFSN"/>
    <property type="match status" value="1"/>
</dbReference>
<dbReference type="SUPFAM" id="SSF57392">
    <property type="entry name" value="Defensin-like"/>
    <property type="match status" value="1"/>
</dbReference>
<dbReference type="PROSITE" id="PS00269">
    <property type="entry name" value="DEFENSIN"/>
    <property type="match status" value="1"/>
</dbReference>